<sequence length="159" mass="17645">MSQVLTTYETPVLPEWVDYNGHLRDAFYLLVFSYATDALMAHIGLDSQNRDASGHSLFTLECHLNFLHEVKEGARVEVRTQLLGHDRKRLHIHHALYLPGSGQALALSEQMLLHVSLDGPRSAPFEGEVLARVEALAEAHRALPVPEGVGRVIGLPPVR</sequence>
<organism>
    <name type="scientific">Pseudomonas aeruginosa (strain ATCC 15692 / DSM 22644 / CIP 104116 / JCM 14847 / LMG 12228 / 1C / PRS 101 / PAO1)</name>
    <dbReference type="NCBI Taxonomy" id="208964"/>
    <lineage>
        <taxon>Bacteria</taxon>
        <taxon>Pseudomonadati</taxon>
        <taxon>Pseudomonadota</taxon>
        <taxon>Gammaproteobacteria</taxon>
        <taxon>Pseudomonadales</taxon>
        <taxon>Pseudomonadaceae</taxon>
        <taxon>Pseudomonas</taxon>
    </lineage>
</organism>
<protein>
    <recommendedName>
        <fullName evidence="5">Betainyl-CoA thioesterase</fullName>
        <ecNumber evidence="2">3.1.2.33</ecNumber>
    </recommendedName>
    <alternativeName>
        <fullName evidence="4">Betainyl-CoA thiolase</fullName>
    </alternativeName>
</protein>
<name>CDHB_PSEAE</name>
<reference key="1">
    <citation type="journal article" date="2000" name="Nature">
        <title>Complete genome sequence of Pseudomonas aeruginosa PAO1, an opportunistic pathogen.</title>
        <authorList>
            <person name="Stover C.K."/>
            <person name="Pham X.-Q.T."/>
            <person name="Erwin A.L."/>
            <person name="Mizoguchi S.D."/>
            <person name="Warrener P."/>
            <person name="Hickey M.J."/>
            <person name="Brinkman F.S.L."/>
            <person name="Hufnagle W.O."/>
            <person name="Kowalik D.J."/>
            <person name="Lagrou M."/>
            <person name="Garber R.L."/>
            <person name="Goltry L."/>
            <person name="Tolentino E."/>
            <person name="Westbrock-Wadman S."/>
            <person name="Yuan Y."/>
            <person name="Brody L.L."/>
            <person name="Coulter S.N."/>
            <person name="Folger K.R."/>
            <person name="Kas A."/>
            <person name="Larbig K."/>
            <person name="Lim R.M."/>
            <person name="Smith K.A."/>
            <person name="Spencer D.H."/>
            <person name="Wong G.K.-S."/>
            <person name="Wu Z."/>
            <person name="Paulsen I.T."/>
            <person name="Reizer J."/>
            <person name="Saier M.H. Jr."/>
            <person name="Hancock R.E.W."/>
            <person name="Lory S."/>
            <person name="Olson M.V."/>
        </authorList>
    </citation>
    <scope>NUCLEOTIDE SEQUENCE [LARGE SCALE GENOMIC DNA]</scope>
    <source>
        <strain>ATCC 15692 / DSM 22644 / CIP 104116 / JCM 14847 / LMG 12228 / 1C / PRS 101 / PAO1</strain>
    </source>
</reference>
<reference key="2">
    <citation type="journal article" date="2009" name="Microbiology">
        <title>Identification of genes required for Pseudomonas aeruginosa carnitine catabolism.</title>
        <authorList>
            <person name="Wargo M.J."/>
            <person name="Hogan D.A."/>
        </authorList>
    </citation>
    <scope>FUNCTION IN CARNITINE CATABOLISM</scope>
    <scope>INDUCTION</scope>
    <scope>DISRUPTION PHENOTYPE</scope>
    <source>
        <strain>ATCC 15692 / DSM 22644 / CIP 104116 / JCM 14847 / LMG 12228 / 1C / PRS 101 / PAO1</strain>
    </source>
</reference>
<reference key="3">
    <citation type="journal article" date="2014" name="Nat. Chem. Biol.">
        <title>Revealing the hidden functional diversity of an enzyme family.</title>
        <authorList>
            <person name="Bastard K."/>
            <person name="Smith A.A."/>
            <person name="Vergne-Vaxelaire C."/>
            <person name="Perret A."/>
            <person name="Zaparucha A."/>
            <person name="De Melo-Minardi R."/>
            <person name="Mariage A."/>
            <person name="Boutard M."/>
            <person name="Debard A."/>
            <person name="Lechaplais C."/>
            <person name="Pelle C."/>
            <person name="Pellouin V."/>
            <person name="Perchat N."/>
            <person name="Petit J.L."/>
            <person name="Kreimeyer A."/>
            <person name="Medigue C."/>
            <person name="Weissenbach J."/>
            <person name="Artiguenave F."/>
            <person name="De Berardinis V."/>
            <person name="Vallenet D."/>
            <person name="Salanoubat M."/>
        </authorList>
    </citation>
    <scope>FUNCTION</scope>
    <scope>CATALYTIC ACTIVITY</scope>
</reference>
<accession>Q9HTH9</accession>
<feature type="chain" id="PRO_0000460825" description="Betainyl-CoA thioesterase">
    <location>
        <begin position="1"/>
        <end position="159"/>
    </location>
</feature>
<dbReference type="EC" id="3.1.2.33" evidence="2"/>
<dbReference type="EMBL" id="AE004091">
    <property type="protein sequence ID" value="AAG08770.1"/>
    <property type="molecule type" value="Genomic_DNA"/>
</dbReference>
<dbReference type="PIR" id="E82972">
    <property type="entry name" value="E82972"/>
</dbReference>
<dbReference type="RefSeq" id="NP_254072.1">
    <property type="nucleotide sequence ID" value="NC_002516.2"/>
</dbReference>
<dbReference type="RefSeq" id="WP_003114441.1">
    <property type="nucleotide sequence ID" value="NZ_QZGE01000031.1"/>
</dbReference>
<dbReference type="SMR" id="Q9HTH9"/>
<dbReference type="STRING" id="208964.PA5385"/>
<dbReference type="PaxDb" id="208964-PA5385"/>
<dbReference type="DNASU" id="881644"/>
<dbReference type="GeneID" id="881644"/>
<dbReference type="KEGG" id="pae:PA5385"/>
<dbReference type="PATRIC" id="fig|208964.12.peg.5645"/>
<dbReference type="PseudoCAP" id="PA5385"/>
<dbReference type="HOGENOM" id="CLU_101141_6_0_6"/>
<dbReference type="InParanoid" id="Q9HTH9"/>
<dbReference type="OrthoDB" id="6117985at2"/>
<dbReference type="PhylomeDB" id="Q9HTH9"/>
<dbReference type="BioCyc" id="MetaCyc:G1FZ6-5512-MONOMER"/>
<dbReference type="BioCyc" id="PAER208964:G1FZ6-5512-MONOMER"/>
<dbReference type="UniPathway" id="UPA00117"/>
<dbReference type="Proteomes" id="UP000002438">
    <property type="component" value="Chromosome"/>
</dbReference>
<dbReference type="GO" id="GO:0047617">
    <property type="term" value="F:fatty acyl-CoA hydrolase activity"/>
    <property type="evidence" value="ECO:0000318"/>
    <property type="project" value="GO_Central"/>
</dbReference>
<dbReference type="GO" id="GO:0042413">
    <property type="term" value="P:carnitine catabolic process"/>
    <property type="evidence" value="ECO:0000315"/>
    <property type="project" value="PseudoCAP"/>
</dbReference>
<dbReference type="CDD" id="cd00586">
    <property type="entry name" value="4HBT"/>
    <property type="match status" value="1"/>
</dbReference>
<dbReference type="Gene3D" id="3.10.129.10">
    <property type="entry name" value="Hotdog Thioesterase"/>
    <property type="match status" value="1"/>
</dbReference>
<dbReference type="InterPro" id="IPR050563">
    <property type="entry name" value="4-hydroxybenzoyl-CoA_TE"/>
</dbReference>
<dbReference type="InterPro" id="IPR029069">
    <property type="entry name" value="HotDog_dom_sf"/>
</dbReference>
<dbReference type="PANTHER" id="PTHR31793">
    <property type="entry name" value="4-HYDROXYBENZOYL-COA THIOESTERASE FAMILY MEMBER"/>
    <property type="match status" value="1"/>
</dbReference>
<dbReference type="PANTHER" id="PTHR31793:SF2">
    <property type="entry name" value="BLR1345 PROTEIN"/>
    <property type="match status" value="1"/>
</dbReference>
<dbReference type="Pfam" id="PF13279">
    <property type="entry name" value="4HBT_2"/>
    <property type="match status" value="1"/>
</dbReference>
<dbReference type="SUPFAM" id="SSF54637">
    <property type="entry name" value="Thioesterase/thiol ester dehydrase-isomerase"/>
    <property type="match status" value="1"/>
</dbReference>
<comment type="function">
    <text evidence="1 2">Catalyzes the cleavage of betainyl-CoA (N,N,N-trimethylglycyl-CoA) into glycine betaine and coenzyme A (PubMed:24240508). Is involved in a L-carnitine degradation pathway that allows P.aeruginosa to grow on L-carnitine as the sole source of carbon and nitrogen (PubMed:19406895).</text>
</comment>
<comment type="catalytic activity">
    <reaction evidence="2">
        <text>N,N,N-trimethylglycyl-CoA + H2O = glycine betaine + CoA + H(+)</text>
        <dbReference type="Rhea" id="RHEA:45716"/>
        <dbReference type="ChEBI" id="CHEBI:15377"/>
        <dbReference type="ChEBI" id="CHEBI:15378"/>
        <dbReference type="ChEBI" id="CHEBI:17750"/>
        <dbReference type="ChEBI" id="CHEBI:57287"/>
        <dbReference type="ChEBI" id="CHEBI:85405"/>
        <dbReference type="EC" id="3.1.2.33"/>
    </reaction>
    <physiologicalReaction direction="left-to-right" evidence="2">
        <dbReference type="Rhea" id="RHEA:45717"/>
    </physiologicalReaction>
</comment>
<comment type="pathway">
    <text evidence="6">Amine and polyamine metabolism; carnitine metabolism.</text>
</comment>
<comment type="induction">
    <text evidence="1">Highly induced by carnitine via the CdhR transcriptional regulator (PubMed:19406895). Not induced by glycine betaine or pyruvate (PubMed:19406895).</text>
</comment>
<comment type="disruption phenotype">
    <text evidence="1">Cells are incapable of growth on carnitine.</text>
</comment>
<comment type="similarity">
    <text evidence="5">Belongs to the betainyl-CoA thioesterase family.</text>
</comment>
<evidence type="ECO:0000269" key="1">
    <source>
    </source>
</evidence>
<evidence type="ECO:0000269" key="2">
    <source>
    </source>
</evidence>
<evidence type="ECO:0000303" key="3">
    <source>
    </source>
</evidence>
<evidence type="ECO:0000303" key="4">
    <source>
    </source>
</evidence>
<evidence type="ECO:0000305" key="5"/>
<evidence type="ECO:0000305" key="6">
    <source>
    </source>
</evidence>
<evidence type="ECO:0000312" key="7">
    <source>
        <dbReference type="EMBL" id="AAG08770.1"/>
    </source>
</evidence>
<proteinExistence type="evidence at protein level"/>
<keyword id="KW-0378">Hydrolase</keyword>
<keyword id="KW-1185">Reference proteome</keyword>
<gene>
    <name evidence="3" type="primary">cdhB</name>
    <name evidence="7" type="ordered locus">PA5385</name>
</gene>